<accession>Q8TGN0</accession>
<proteinExistence type="uncertain"/>
<name>YK156_YEAST</name>
<evidence type="ECO:0000305" key="1"/>
<evidence type="ECO:0000305" key="2">
    <source>
    </source>
</evidence>
<feature type="chain" id="PRO_0000299766" description="Putative uncharacterized protein YKL156C-A">
    <location>
        <begin position="1"/>
        <end position="38"/>
    </location>
</feature>
<reference key="1">
    <citation type="journal article" date="1994" name="Yeast">
        <title>DNA sequencing of a 36.2 kb fragment located between the FAS1 and LAP loci of chromosome XI of Saccharomyces cerevisiae.</title>
        <authorList>
            <person name="Vandenbol M."/>
            <person name="Bolle P.-A."/>
            <person name="Dion C."/>
            <person name="Portetelle D."/>
            <person name="Hilger F."/>
        </authorList>
    </citation>
    <scope>NUCLEOTIDE SEQUENCE [GENOMIC DNA]</scope>
    <source>
        <strain>ATCC 204508 / S288c</strain>
    </source>
</reference>
<reference key="2">
    <citation type="journal article" date="1994" name="Nature">
        <title>Complete DNA sequence of yeast chromosome XI.</title>
        <authorList>
            <person name="Dujon B."/>
            <person name="Alexandraki D."/>
            <person name="Andre B."/>
            <person name="Ansorge W."/>
            <person name="Baladron V."/>
            <person name="Ballesta J.P.G."/>
            <person name="Banrevi A."/>
            <person name="Bolle P.-A."/>
            <person name="Bolotin-Fukuhara M."/>
            <person name="Bossier P."/>
            <person name="Bou G."/>
            <person name="Boyer J."/>
            <person name="Buitrago M.J."/>
            <person name="Cheret G."/>
            <person name="Colleaux L."/>
            <person name="Daignan-Fornier B."/>
            <person name="del Rey F."/>
            <person name="Dion C."/>
            <person name="Domdey H."/>
            <person name="Duesterhoeft A."/>
            <person name="Duesterhus S."/>
            <person name="Entian K.-D."/>
            <person name="Erfle H."/>
            <person name="Esteban P.F."/>
            <person name="Feldmann H."/>
            <person name="Fernandes L."/>
            <person name="Fobo G.M."/>
            <person name="Fritz C."/>
            <person name="Fukuhara H."/>
            <person name="Gabel C."/>
            <person name="Gaillon L."/>
            <person name="Garcia-Cantalejo J.M."/>
            <person name="Garcia-Ramirez J.J."/>
            <person name="Gent M.E."/>
            <person name="Ghazvini M."/>
            <person name="Goffeau A."/>
            <person name="Gonzalez A."/>
            <person name="Grothues D."/>
            <person name="Guerreiro P."/>
            <person name="Hegemann J.H."/>
            <person name="Hewitt N."/>
            <person name="Hilger F."/>
            <person name="Hollenberg C.P."/>
            <person name="Horaitis O."/>
            <person name="Indge K.J."/>
            <person name="Jacquier A."/>
            <person name="James C.M."/>
            <person name="Jauniaux J.-C."/>
            <person name="Jimenez A."/>
            <person name="Keuchel H."/>
            <person name="Kirchrath L."/>
            <person name="Kleine K."/>
            <person name="Koetter P."/>
            <person name="Legrain P."/>
            <person name="Liebl S."/>
            <person name="Louis E.J."/>
            <person name="Maia e Silva A."/>
            <person name="Marck C."/>
            <person name="Monnier A.-L."/>
            <person name="Moestl D."/>
            <person name="Mueller S."/>
            <person name="Obermaier B."/>
            <person name="Oliver S.G."/>
            <person name="Pallier C."/>
            <person name="Pascolo S."/>
            <person name="Pfeiffer F."/>
            <person name="Philippsen P."/>
            <person name="Planta R.J."/>
            <person name="Pohl F.M."/>
            <person name="Pohl T.M."/>
            <person name="Poehlmann R."/>
            <person name="Portetelle D."/>
            <person name="Purnelle B."/>
            <person name="Puzos V."/>
            <person name="Ramezani Rad M."/>
            <person name="Rasmussen S.W."/>
            <person name="Remacha M.A."/>
            <person name="Revuelta J.L."/>
            <person name="Richard G.-F."/>
            <person name="Rieger M."/>
            <person name="Rodrigues-Pousada C."/>
            <person name="Rose M."/>
            <person name="Rupp T."/>
            <person name="Santos M.A."/>
            <person name="Schwager C."/>
            <person name="Sensen C."/>
            <person name="Skala J."/>
            <person name="Soares H."/>
            <person name="Sor F."/>
            <person name="Stegemann J."/>
            <person name="Tettelin H."/>
            <person name="Thierry A."/>
            <person name="Tzermia M."/>
            <person name="Urrestarazu L.A."/>
            <person name="van Dyck L."/>
            <person name="van Vliet-Reedijk J.C."/>
            <person name="Valens M."/>
            <person name="Vandenbol M."/>
            <person name="Vilela C."/>
            <person name="Vissers S."/>
            <person name="von Wettstein D."/>
            <person name="Voss H."/>
            <person name="Wiemann S."/>
            <person name="Xu G."/>
            <person name="Zimmermann J."/>
            <person name="Haasemann M."/>
            <person name="Becker I."/>
            <person name="Mewes H.-W."/>
        </authorList>
    </citation>
    <scope>NUCLEOTIDE SEQUENCE [LARGE SCALE GENOMIC DNA]</scope>
    <source>
        <strain>ATCC 204508 / S288c</strain>
    </source>
</reference>
<reference key="3">
    <citation type="journal article" date="2014" name="G3 (Bethesda)">
        <title>The reference genome sequence of Saccharomyces cerevisiae: Then and now.</title>
        <authorList>
            <person name="Engel S.R."/>
            <person name="Dietrich F.S."/>
            <person name="Fisk D.G."/>
            <person name="Binkley G."/>
            <person name="Balakrishnan R."/>
            <person name="Costanzo M.C."/>
            <person name="Dwight S.S."/>
            <person name="Hitz B.C."/>
            <person name="Karra K."/>
            <person name="Nash R.S."/>
            <person name="Weng S."/>
            <person name="Wong E.D."/>
            <person name="Lloyd P."/>
            <person name="Skrzypek M.S."/>
            <person name="Miyasato S.R."/>
            <person name="Simison M."/>
            <person name="Cherry J.M."/>
        </authorList>
    </citation>
    <scope>GENOME REANNOTATION</scope>
    <source>
        <strain>ATCC 204508 / S288c</strain>
    </source>
</reference>
<reference key="4">
    <citation type="journal article" date="2002" name="Nat. Biotechnol.">
        <title>An integrated approach for finding overlooked genes in yeast.</title>
        <authorList>
            <person name="Kumar A."/>
            <person name="Harrison P.M."/>
            <person name="Cheung K.-H."/>
            <person name="Lan N."/>
            <person name="Echols N."/>
            <person name="Bertone P."/>
            <person name="Miller P."/>
            <person name="Gerstein M.B."/>
            <person name="Snyder M."/>
        </authorList>
    </citation>
    <scope>NUCLEOTIDE SEQUENCE [GENOMIC DNA]</scope>
</reference>
<protein>
    <recommendedName>
        <fullName>Putative uncharacterized protein YKL156C-A</fullName>
    </recommendedName>
</protein>
<organism>
    <name type="scientific">Saccharomyces cerevisiae (strain ATCC 204508 / S288c)</name>
    <name type="common">Baker's yeast</name>
    <dbReference type="NCBI Taxonomy" id="559292"/>
    <lineage>
        <taxon>Eukaryota</taxon>
        <taxon>Fungi</taxon>
        <taxon>Dikarya</taxon>
        <taxon>Ascomycota</taxon>
        <taxon>Saccharomycotina</taxon>
        <taxon>Saccharomycetes</taxon>
        <taxon>Saccharomycetales</taxon>
        <taxon>Saccharomycetaceae</taxon>
        <taxon>Saccharomyces</taxon>
    </lineage>
</organism>
<sequence>MFKQPGHLTSRKYDLGPWTNVFNLCFLASEAAVGCNKS</sequence>
<gene>
    <name type="ordered locus">YKL156C-A</name>
</gene>
<comment type="miscellaneous">
    <text evidence="1">Completely overlaps RPS27A.</text>
</comment>
<comment type="caution">
    <text evidence="2">Product of a dubious gene prediction unlikely to encode a functional protein. Because of that it is not part of the S.cerevisiae S288c complete/reference proteome set.</text>
</comment>
<dbReference type="EMBL" id="Z26877">
    <property type="status" value="NOT_ANNOTATED_CDS"/>
    <property type="molecule type" value="Genomic_DNA"/>
</dbReference>
<dbReference type="EMBL" id="Z28155">
    <property type="status" value="NOT_ANNOTATED_CDS"/>
    <property type="molecule type" value="Genomic_DNA"/>
</dbReference>
<dbReference type="EMBL" id="Z28156">
    <property type="status" value="NOT_ANNOTATED_CDS"/>
    <property type="molecule type" value="Genomic_DNA"/>
</dbReference>
<dbReference type="EMBL" id="AF479960">
    <property type="protein sequence ID" value="AAL79273.1"/>
    <property type="molecule type" value="Genomic_DNA"/>
</dbReference>
<dbReference type="STRING" id="4932.YKL156C-A"/>
<dbReference type="PaxDb" id="4932-YKL156C-A"/>
<dbReference type="EnsemblFungi" id="YKL156C-A_mRNA">
    <property type="protein sequence ID" value="YKL156C-A"/>
    <property type="gene ID" value="YKL156C-A"/>
</dbReference>
<dbReference type="AGR" id="SGD:S000028668"/>
<dbReference type="SGD" id="S000028668">
    <property type="gene designation" value="YKL156C-A"/>
</dbReference>
<dbReference type="HOGENOM" id="CLU_3335918_0_0_1"/>